<proteinExistence type="inferred from homology"/>
<reference key="1">
    <citation type="submission" date="2008-05" db="EMBL/GenBank/DDBJ databases">
        <title>Complete sequence of Shigella boydii serotype 18 strain BS512.</title>
        <authorList>
            <person name="Rasko D.A."/>
            <person name="Rosovitz M."/>
            <person name="Maurelli A.T."/>
            <person name="Myers G."/>
            <person name="Seshadri R."/>
            <person name="Cer R."/>
            <person name="Jiang L."/>
            <person name="Ravel J."/>
            <person name="Sebastian Y."/>
        </authorList>
    </citation>
    <scope>NUCLEOTIDE SEQUENCE [LARGE SCALE GENOMIC DNA]</scope>
    <source>
        <strain>CDC 3083-94 / BS512</strain>
    </source>
</reference>
<protein>
    <recommendedName>
        <fullName evidence="1">Potassium-transporting ATPase potassium-binding subunit</fullName>
    </recommendedName>
    <alternativeName>
        <fullName evidence="1">ATP phosphohydrolase [potassium-transporting] A chain</fullName>
    </alternativeName>
    <alternativeName>
        <fullName evidence="1">Potassium-binding and translocating subunit A</fullName>
    </alternativeName>
    <alternativeName>
        <fullName evidence="1">Potassium-translocating ATPase A chain</fullName>
    </alternativeName>
</protein>
<dbReference type="EMBL" id="CP001063">
    <property type="protein sequence ID" value="ACD10322.1"/>
    <property type="molecule type" value="Genomic_DNA"/>
</dbReference>
<dbReference type="RefSeq" id="WP_000730099.1">
    <property type="nucleotide sequence ID" value="NC_010658.1"/>
</dbReference>
<dbReference type="SMR" id="B2TTJ6"/>
<dbReference type="STRING" id="344609.SbBS512_E0551"/>
<dbReference type="KEGG" id="sbc:SbBS512_E0551"/>
<dbReference type="HOGENOM" id="CLU_018614_3_0_6"/>
<dbReference type="Proteomes" id="UP000001030">
    <property type="component" value="Chromosome"/>
</dbReference>
<dbReference type="GO" id="GO:0005886">
    <property type="term" value="C:plasma membrane"/>
    <property type="evidence" value="ECO:0007669"/>
    <property type="project" value="UniProtKB-SubCell"/>
</dbReference>
<dbReference type="GO" id="GO:0008556">
    <property type="term" value="F:P-type potassium transmembrane transporter activity"/>
    <property type="evidence" value="ECO:0007669"/>
    <property type="project" value="InterPro"/>
</dbReference>
<dbReference type="GO" id="GO:0030955">
    <property type="term" value="F:potassium ion binding"/>
    <property type="evidence" value="ECO:0007669"/>
    <property type="project" value="UniProtKB-UniRule"/>
</dbReference>
<dbReference type="HAMAP" id="MF_00275">
    <property type="entry name" value="KdpA"/>
    <property type="match status" value="1"/>
</dbReference>
<dbReference type="InterPro" id="IPR004623">
    <property type="entry name" value="KdpA"/>
</dbReference>
<dbReference type="NCBIfam" id="TIGR00680">
    <property type="entry name" value="kdpA"/>
    <property type="match status" value="1"/>
</dbReference>
<dbReference type="PANTHER" id="PTHR30607">
    <property type="entry name" value="POTASSIUM-TRANSPORTING ATPASE A CHAIN"/>
    <property type="match status" value="1"/>
</dbReference>
<dbReference type="PANTHER" id="PTHR30607:SF2">
    <property type="entry name" value="POTASSIUM-TRANSPORTING ATPASE POTASSIUM-BINDING SUBUNIT"/>
    <property type="match status" value="1"/>
</dbReference>
<dbReference type="Pfam" id="PF03814">
    <property type="entry name" value="KdpA"/>
    <property type="match status" value="1"/>
</dbReference>
<dbReference type="PIRSF" id="PIRSF001294">
    <property type="entry name" value="K_ATPaseA"/>
    <property type="match status" value="1"/>
</dbReference>
<feature type="chain" id="PRO_1000114706" description="Potassium-transporting ATPase potassium-binding subunit">
    <location>
        <begin position="1"/>
        <end position="557"/>
    </location>
</feature>
<feature type="transmembrane region" description="Helical" evidence="1">
    <location>
        <begin position="5"/>
        <end position="25"/>
    </location>
</feature>
<feature type="transmembrane region" description="Helical" evidence="1">
    <location>
        <begin position="63"/>
        <end position="83"/>
    </location>
</feature>
<feature type="transmembrane region" description="Helical" evidence="1">
    <location>
        <begin position="132"/>
        <end position="152"/>
    </location>
</feature>
<feature type="transmembrane region" description="Helical" evidence="1">
    <location>
        <begin position="170"/>
        <end position="190"/>
    </location>
</feature>
<feature type="transmembrane region" description="Helical" evidence="1">
    <location>
        <begin position="253"/>
        <end position="273"/>
    </location>
</feature>
<feature type="transmembrane region" description="Helical" evidence="1">
    <location>
        <begin position="283"/>
        <end position="303"/>
    </location>
</feature>
<feature type="transmembrane region" description="Helical" evidence="1">
    <location>
        <begin position="329"/>
        <end position="349"/>
    </location>
</feature>
<feature type="transmembrane region" description="Helical" evidence="1">
    <location>
        <begin position="356"/>
        <end position="376"/>
    </location>
</feature>
<feature type="transmembrane region" description="Helical" evidence="1">
    <location>
        <begin position="379"/>
        <end position="399"/>
    </location>
</feature>
<feature type="transmembrane region" description="Helical" evidence="1">
    <location>
        <begin position="416"/>
        <end position="436"/>
    </location>
</feature>
<feature type="transmembrane region" description="Helical" evidence="1">
    <location>
        <begin position="484"/>
        <end position="504"/>
    </location>
</feature>
<feature type="transmembrane region" description="Helical" evidence="1">
    <location>
        <begin position="526"/>
        <end position="546"/>
    </location>
</feature>
<accession>B2TTJ6</accession>
<comment type="function">
    <text evidence="1">Part of the high-affinity ATP-driven potassium transport (or Kdp) system, which catalyzes the hydrolysis of ATP coupled with the electrogenic transport of potassium into the cytoplasm. This subunit binds the periplasmic potassium ions and delivers the ions to the membrane domain of KdpB through an intramembrane tunnel.</text>
</comment>
<comment type="subunit">
    <text evidence="1">The system is composed of three essential subunits: KdpA, KdpB and KdpC.</text>
</comment>
<comment type="subcellular location">
    <subcellularLocation>
        <location evidence="1">Cell inner membrane</location>
        <topology evidence="1">Multi-pass membrane protein</topology>
    </subcellularLocation>
</comment>
<comment type="similarity">
    <text evidence="1">Belongs to the KdpA family.</text>
</comment>
<keyword id="KW-0997">Cell inner membrane</keyword>
<keyword id="KW-1003">Cell membrane</keyword>
<keyword id="KW-0406">Ion transport</keyword>
<keyword id="KW-0472">Membrane</keyword>
<keyword id="KW-0630">Potassium</keyword>
<keyword id="KW-0633">Potassium transport</keyword>
<keyword id="KW-1185">Reference proteome</keyword>
<keyword id="KW-0812">Transmembrane</keyword>
<keyword id="KW-1133">Transmembrane helix</keyword>
<keyword id="KW-0813">Transport</keyword>
<sequence length="557" mass="59173">MAAQGFLLIATFLLVLMVLARPLGSGLARLINDIPLPGTAGVERILFRLPGVSDHEMNWKQYLCAILGLNMLGLAVLFFMLLGQHYLPLNPQQLPGLSWDLALNTAVNFVTNTNWQSYSGETTLSYFSQMAGLTVQNFLSAASGIAVIFAFIRAFTRQSMSTLGNAWVDLLRITLWVLVPVALLIALFLIQQGALQNFLPYQAVNTVEGAQQLLPMGPVASQEAIKMLGTNGGGFFNANSSHPFENPTALTNFVQMLAIFLIPTALCFAFGEVTGDRRQGRMLLWAMSVIFVICVGVVMWAEVQGNPHLLALGADSSINMEGKESRFGVLVSSLFAVVTTAASCGAVIAMHDSFTALGGMVPMWLMQIGEVVFGGVGSGLYGMMLFVLLAVFIAGLMIGRTPEYLGKKIDVREMKLTALAILVTPTLVLMGAALAMMTDAGRSAMLNPGPHGFSEVLYAVSSAANNNGSAFAGLSANSPFWNCLLAFCMFVGRFGVIIPVMAIAGSLVSKKSQPASSGTLPTHGPLFVGLLIGTVLLVGALTFIPALALGPVAEYLS</sequence>
<name>KDPA_SHIB3</name>
<evidence type="ECO:0000255" key="1">
    <source>
        <dbReference type="HAMAP-Rule" id="MF_00275"/>
    </source>
</evidence>
<organism>
    <name type="scientific">Shigella boydii serotype 18 (strain CDC 3083-94 / BS512)</name>
    <dbReference type="NCBI Taxonomy" id="344609"/>
    <lineage>
        <taxon>Bacteria</taxon>
        <taxon>Pseudomonadati</taxon>
        <taxon>Pseudomonadota</taxon>
        <taxon>Gammaproteobacteria</taxon>
        <taxon>Enterobacterales</taxon>
        <taxon>Enterobacteriaceae</taxon>
        <taxon>Shigella</taxon>
    </lineage>
</organism>
<gene>
    <name evidence="1" type="primary">kdpA</name>
    <name type="ordered locus">SbBS512_E0551</name>
</gene>